<proteinExistence type="inferred from homology"/>
<comment type="function">
    <text evidence="2">Potently blocks Kv1.1/KCNA1 (85%), Kv1.2/KCNA2 (91%), Kv1.3/KCNA3 (89%), Kv1.6/KCNA6 (94%), and Shaker (97%).</text>
</comment>
<comment type="subcellular location">
    <subcellularLocation>
        <location evidence="5">Secreted</location>
    </subcellularLocation>
</comment>
<comment type="tissue specificity">
    <text evidence="5">Expressed by the venom gland.</text>
</comment>
<comment type="domain">
    <text evidence="2">Has the structural arrangement of an alpha-helix connected to a beta-sheet by disulfide bonds (CSalpha/beta).</text>
</comment>
<comment type="similarity">
    <text evidence="4">Belongs to the short scorpion toxin superfamily. Potassium channel inhibitor family. Alpha-KTx 04 subfamily.</text>
</comment>
<sequence>MKAFYGILIIFILISMIHLSQQVFINATCTLTSQCRPKCLEAIGRPNSKCINRKCKCYP</sequence>
<feature type="signal peptide" evidence="3">
    <location>
        <begin position="1"/>
        <end position="22"/>
    </location>
</feature>
<feature type="chain" id="PRO_5011990440" description="Putative potassium channel toxin Ts24">
    <location>
        <begin position="23"/>
        <end position="59"/>
    </location>
</feature>
<feature type="site" description="Basic residue of the functional dyad" evidence="1">
    <location>
        <position position="49"/>
    </location>
</feature>
<feature type="site" description="Aromatic residue of the functional dyad" evidence="1">
    <location>
        <position position="58"/>
    </location>
</feature>
<feature type="disulfide bond" evidence="2">
    <location>
        <begin position="29"/>
        <end position="50"/>
    </location>
</feature>
<feature type="disulfide bond" evidence="2">
    <location>
        <begin position="35"/>
        <end position="55"/>
    </location>
</feature>
<feature type="disulfide bond" evidence="2">
    <location>
        <begin position="39"/>
        <end position="57"/>
    </location>
</feature>
<keyword id="KW-1015">Disulfide bond</keyword>
<keyword id="KW-0872">Ion channel impairing toxin</keyword>
<keyword id="KW-0528">Neurotoxin</keyword>
<keyword id="KW-0632">Potassium channel impairing toxin</keyword>
<keyword id="KW-0964">Secreted</keyword>
<keyword id="KW-0732">Signal</keyword>
<keyword id="KW-0800">Toxin</keyword>
<keyword id="KW-1220">Voltage-gated potassium channel impairing toxin</keyword>
<evidence type="ECO:0000250" key="1">
    <source>
        <dbReference type="UniProtKB" id="O46028"/>
    </source>
</evidence>
<evidence type="ECO:0000250" key="2">
    <source>
        <dbReference type="UniProtKB" id="P46114"/>
    </source>
</evidence>
<evidence type="ECO:0000255" key="3"/>
<evidence type="ECO:0000305" key="4"/>
<evidence type="ECO:0000305" key="5">
    <source>
    </source>
</evidence>
<evidence type="ECO:0000312" key="6">
    <source>
        <dbReference type="EMBL" id="JAW07007.1"/>
    </source>
</evidence>
<protein>
    <recommendedName>
        <fullName evidence="4">Putative potassium channel toxin Ts24</fullName>
    </recommendedName>
    <alternativeName>
        <fullName evidence="4">Putative KTx</fullName>
    </alternativeName>
    <alternativeName>
        <fullName evidence="4">Tityustoxin-24</fullName>
    </alternativeName>
</protein>
<name>KTX24_TITSE</name>
<dbReference type="EMBL" id="GEUW01000038">
    <property type="protein sequence ID" value="JAW07007.1"/>
    <property type="molecule type" value="mRNA"/>
</dbReference>
<dbReference type="SMR" id="A0A218QWZ8"/>
<dbReference type="GO" id="GO:0005576">
    <property type="term" value="C:extracellular region"/>
    <property type="evidence" value="ECO:0007669"/>
    <property type="project" value="UniProtKB-SubCell"/>
</dbReference>
<dbReference type="GO" id="GO:0008200">
    <property type="term" value="F:ion channel inhibitor activity"/>
    <property type="evidence" value="ECO:0007669"/>
    <property type="project" value="InterPro"/>
</dbReference>
<dbReference type="GO" id="GO:0015459">
    <property type="term" value="F:potassium channel regulator activity"/>
    <property type="evidence" value="ECO:0007669"/>
    <property type="project" value="UniProtKB-KW"/>
</dbReference>
<dbReference type="GO" id="GO:0090729">
    <property type="term" value="F:toxin activity"/>
    <property type="evidence" value="ECO:0007669"/>
    <property type="project" value="UniProtKB-KW"/>
</dbReference>
<dbReference type="Gene3D" id="3.30.30.10">
    <property type="entry name" value="Knottin, scorpion toxin-like"/>
    <property type="match status" value="1"/>
</dbReference>
<dbReference type="InterPro" id="IPR036574">
    <property type="entry name" value="Scorpion_toxin-like_sf"/>
</dbReference>
<dbReference type="InterPro" id="IPR001947">
    <property type="entry name" value="Scorpion_toxinS_K_inh"/>
</dbReference>
<dbReference type="Pfam" id="PF00451">
    <property type="entry name" value="Toxin_2"/>
    <property type="match status" value="1"/>
</dbReference>
<dbReference type="SUPFAM" id="SSF57095">
    <property type="entry name" value="Scorpion toxin-like"/>
    <property type="match status" value="1"/>
</dbReference>
<dbReference type="PROSITE" id="PS01138">
    <property type="entry name" value="SCORP_SHORT_TOXIN"/>
    <property type="match status" value="1"/>
</dbReference>
<reference evidence="6" key="1">
    <citation type="journal article" date="2018" name="PLoS ONE">
        <title>Proteomic endorsed transcriptomic profiles of venom glands from Tityus obscurus and T. serrulatus scorpions.</title>
        <authorList>
            <person name="de Oliveira U.C."/>
            <person name="Nishiyama M.Y. Jr."/>
            <person name="Dos Santos M.B.V."/>
            <person name="Santos-da-Silva A.P."/>
            <person name="Chalkidis H.M."/>
            <person name="Souza-Imberg A."/>
            <person name="Candido D.M."/>
            <person name="Yamanouye N."/>
            <person name="Dorce V.A.C."/>
            <person name="Junqueira-de-Azevedo I.L.M."/>
        </authorList>
    </citation>
    <scope>NUCLEOTIDE SEQUENCE [MRNA]</scope>
    <source>
        <tissue>Telson</tissue>
    </source>
</reference>
<accession>A0A218QWZ8</accession>
<organism>
    <name type="scientific">Tityus serrulatus</name>
    <name type="common">Brazilian scorpion</name>
    <dbReference type="NCBI Taxonomy" id="6887"/>
    <lineage>
        <taxon>Eukaryota</taxon>
        <taxon>Metazoa</taxon>
        <taxon>Ecdysozoa</taxon>
        <taxon>Arthropoda</taxon>
        <taxon>Chelicerata</taxon>
        <taxon>Arachnida</taxon>
        <taxon>Scorpiones</taxon>
        <taxon>Buthida</taxon>
        <taxon>Buthoidea</taxon>
        <taxon>Buthidae</taxon>
        <taxon>Tityus</taxon>
    </lineage>
</organism>